<proteinExistence type="evidence at transcript level"/>
<evidence type="ECO:0000250" key="1"/>
<evidence type="ECO:0000255" key="2"/>
<evidence type="ECO:0000255" key="3">
    <source>
        <dbReference type="PROSITE-ProRule" id="PRU10003"/>
    </source>
</evidence>
<evidence type="ECO:0000256" key="4">
    <source>
        <dbReference type="SAM" id="MobiDB-lite"/>
    </source>
</evidence>
<evidence type="ECO:0000305" key="5"/>
<accession>Q41438</accession>
<organism>
    <name type="scientific">Solanum tuberosum</name>
    <name type="common">Potato</name>
    <dbReference type="NCBI Taxonomy" id="4113"/>
    <lineage>
        <taxon>Eukaryota</taxon>
        <taxon>Viridiplantae</taxon>
        <taxon>Streptophyta</taxon>
        <taxon>Embryophyta</taxon>
        <taxon>Tracheophyta</taxon>
        <taxon>Spermatophyta</taxon>
        <taxon>Magnoliopsida</taxon>
        <taxon>eudicotyledons</taxon>
        <taxon>Gunneridae</taxon>
        <taxon>Pentapetalae</taxon>
        <taxon>asterids</taxon>
        <taxon>lamiids</taxon>
        <taxon>Solanales</taxon>
        <taxon>Solanaceae</taxon>
        <taxon>Solanoideae</taxon>
        <taxon>Solaneae</taxon>
        <taxon>Solanum</taxon>
    </lineage>
</organism>
<gene>
    <name type="primary">HMG3</name>
</gene>
<keyword id="KW-0256">Endoplasmic reticulum</keyword>
<keyword id="KW-0325">Glycoprotein</keyword>
<keyword id="KW-0414">Isoprene biosynthesis</keyword>
<keyword id="KW-0472">Membrane</keyword>
<keyword id="KW-0521">NADP</keyword>
<keyword id="KW-0560">Oxidoreductase</keyword>
<keyword id="KW-1185">Reference proteome</keyword>
<keyword id="KW-0812">Transmembrane</keyword>
<keyword id="KW-1133">Transmembrane helix</keyword>
<name>HMDH3_SOLTU</name>
<comment type="function">
    <text>Catalyzes the synthesis of mevalonate. The specific precursor of all isoprenoid compounds present in plants.</text>
</comment>
<comment type="catalytic activity">
    <reaction evidence="3">
        <text>(R)-mevalonate + 2 NADP(+) + CoA = (3S)-3-hydroxy-3-methylglutaryl-CoA + 2 NADPH + 2 H(+)</text>
        <dbReference type="Rhea" id="RHEA:15989"/>
        <dbReference type="ChEBI" id="CHEBI:15378"/>
        <dbReference type="ChEBI" id="CHEBI:36464"/>
        <dbReference type="ChEBI" id="CHEBI:43074"/>
        <dbReference type="ChEBI" id="CHEBI:57287"/>
        <dbReference type="ChEBI" id="CHEBI:57783"/>
        <dbReference type="ChEBI" id="CHEBI:58349"/>
        <dbReference type="EC" id="1.1.1.34"/>
    </reaction>
</comment>
<comment type="pathway">
    <text>Metabolic intermediate biosynthesis; (R)-mevalonate biosynthesis; (R)-mevalonate from acetyl-CoA: step 3/3.</text>
</comment>
<comment type="subcellular location">
    <subcellularLocation>
        <location>Endoplasmic reticulum membrane</location>
        <topology>Multi-pass membrane protein</topology>
    </subcellularLocation>
</comment>
<comment type="tissue specificity">
    <text>Expressed in mature petals and anthers.</text>
</comment>
<comment type="similarity">
    <text evidence="5">Belongs to the HMG-CoA reductase family.</text>
</comment>
<dbReference type="EC" id="1.1.1.34"/>
<dbReference type="EMBL" id="U51986">
    <property type="protein sequence ID" value="AAB52552.1"/>
    <property type="molecule type" value="mRNA"/>
</dbReference>
<dbReference type="EMBL" id="AB022690">
    <property type="protein sequence ID" value="BAA93631.1"/>
    <property type="molecule type" value="Genomic_DNA"/>
</dbReference>
<dbReference type="PIR" id="S59946">
    <property type="entry name" value="S59946"/>
</dbReference>
<dbReference type="PIR" id="T07112">
    <property type="entry name" value="T07112"/>
</dbReference>
<dbReference type="RefSeq" id="NP_001274940.1">
    <property type="nucleotide sequence ID" value="NM_001288011.1"/>
</dbReference>
<dbReference type="SMR" id="Q41438"/>
<dbReference type="STRING" id="4113.Q41438"/>
<dbReference type="GlyCosmos" id="Q41438">
    <property type="glycosylation" value="5 sites, No reported glycans"/>
</dbReference>
<dbReference type="PaxDb" id="4113-PGSC0003DMT400048075"/>
<dbReference type="EnsemblPlants" id="PGSC0003DMT400048075">
    <property type="protein sequence ID" value="PGSC0003DMT400048075"/>
    <property type="gene ID" value="PGSC0003DMG400018679"/>
</dbReference>
<dbReference type="GeneID" id="102577467"/>
<dbReference type="Gramene" id="PGSC0003DMT400048075">
    <property type="protein sequence ID" value="PGSC0003DMT400048075"/>
    <property type="gene ID" value="PGSC0003DMG400018679"/>
</dbReference>
<dbReference type="KEGG" id="sot:102577467"/>
<dbReference type="eggNOG" id="KOG2480">
    <property type="taxonomic scope" value="Eukaryota"/>
</dbReference>
<dbReference type="HOGENOM" id="CLU_001734_2_2_1"/>
<dbReference type="InParanoid" id="Q41438"/>
<dbReference type="OMA" id="IMGQCCE"/>
<dbReference type="OrthoDB" id="310654at2759"/>
<dbReference type="UniPathway" id="UPA00058">
    <property type="reaction ID" value="UER00103"/>
</dbReference>
<dbReference type="Proteomes" id="UP000011115">
    <property type="component" value="Unassembled WGS sequence"/>
</dbReference>
<dbReference type="ExpressionAtlas" id="Q41438">
    <property type="expression patterns" value="baseline and differential"/>
</dbReference>
<dbReference type="GO" id="GO:0005789">
    <property type="term" value="C:endoplasmic reticulum membrane"/>
    <property type="evidence" value="ECO:0000318"/>
    <property type="project" value="GO_Central"/>
</dbReference>
<dbReference type="GO" id="GO:0005778">
    <property type="term" value="C:peroxisomal membrane"/>
    <property type="evidence" value="ECO:0000318"/>
    <property type="project" value="GO_Central"/>
</dbReference>
<dbReference type="GO" id="GO:0004420">
    <property type="term" value="F:hydroxymethylglutaryl-CoA reductase (NADPH) activity"/>
    <property type="evidence" value="ECO:0000318"/>
    <property type="project" value="GO_Central"/>
</dbReference>
<dbReference type="GO" id="GO:0015936">
    <property type="term" value="P:coenzyme A metabolic process"/>
    <property type="evidence" value="ECO:0007669"/>
    <property type="project" value="InterPro"/>
</dbReference>
<dbReference type="GO" id="GO:0008299">
    <property type="term" value="P:isoprenoid biosynthetic process"/>
    <property type="evidence" value="ECO:0000318"/>
    <property type="project" value="GO_Central"/>
</dbReference>
<dbReference type="GO" id="GO:0016126">
    <property type="term" value="P:sterol biosynthetic process"/>
    <property type="evidence" value="ECO:0000318"/>
    <property type="project" value="GO_Central"/>
</dbReference>
<dbReference type="CDD" id="cd00643">
    <property type="entry name" value="HMG-CoA_reductase_classI"/>
    <property type="match status" value="1"/>
</dbReference>
<dbReference type="FunFam" id="1.10.3270.10:FF:000002">
    <property type="entry name" value="3-hydroxy-3-methylglutaryl coenzyme A reductase"/>
    <property type="match status" value="1"/>
</dbReference>
<dbReference type="FunFam" id="3.30.70.420:FF:000001">
    <property type="entry name" value="3-hydroxy-3-methylglutaryl coenzyme A reductase"/>
    <property type="match status" value="1"/>
</dbReference>
<dbReference type="FunFam" id="3.90.770.10:FF:000001">
    <property type="entry name" value="3-hydroxy-3-methylglutaryl coenzyme A reductase"/>
    <property type="match status" value="1"/>
</dbReference>
<dbReference type="Gene3D" id="3.90.770.10">
    <property type="entry name" value="3-hydroxy-3-methylglutaryl-coenzyme A Reductase, Chain A, domain 2"/>
    <property type="match status" value="1"/>
</dbReference>
<dbReference type="Gene3D" id="1.10.3270.10">
    <property type="entry name" value="HMGR, N-terminal domain"/>
    <property type="match status" value="1"/>
</dbReference>
<dbReference type="Gene3D" id="3.30.70.420">
    <property type="entry name" value="Hydroxymethylglutaryl-CoA reductase, class I/II, NAD/NADP-binding domain"/>
    <property type="match status" value="1"/>
</dbReference>
<dbReference type="InterPro" id="IPR002202">
    <property type="entry name" value="HMG_CoA_Rdtase"/>
</dbReference>
<dbReference type="InterPro" id="IPR023074">
    <property type="entry name" value="HMG_CoA_Rdtase_cat_sf"/>
</dbReference>
<dbReference type="InterPro" id="IPR023076">
    <property type="entry name" value="HMG_CoA_Rdtase_CS"/>
</dbReference>
<dbReference type="InterPro" id="IPR004554">
    <property type="entry name" value="HMG_CoA_Rdtase_eu_arc"/>
</dbReference>
<dbReference type="InterPro" id="IPR023282">
    <property type="entry name" value="HMG_CoA_Rdtase_N"/>
</dbReference>
<dbReference type="InterPro" id="IPR009023">
    <property type="entry name" value="HMG_CoA_Rdtase_NAD(P)-bd_sf"/>
</dbReference>
<dbReference type="InterPro" id="IPR009029">
    <property type="entry name" value="HMG_CoA_Rdtase_sub-bd_dom_sf"/>
</dbReference>
<dbReference type="NCBIfam" id="TIGR00533">
    <property type="entry name" value="HMG_CoA_R_NADP"/>
    <property type="match status" value="1"/>
</dbReference>
<dbReference type="PANTHER" id="PTHR10572">
    <property type="entry name" value="3-HYDROXY-3-METHYLGLUTARYL-COENZYME A REDUCTASE"/>
    <property type="match status" value="1"/>
</dbReference>
<dbReference type="PANTHER" id="PTHR10572:SF38">
    <property type="entry name" value="3-HYDROXY-3-METHYLGLUTARYL-COENZYME A REDUCTASE 3"/>
    <property type="match status" value="1"/>
</dbReference>
<dbReference type="Pfam" id="PF00368">
    <property type="entry name" value="HMG-CoA_red"/>
    <property type="match status" value="1"/>
</dbReference>
<dbReference type="PRINTS" id="PR00071">
    <property type="entry name" value="HMGCOARDTASE"/>
</dbReference>
<dbReference type="SUPFAM" id="SSF55035">
    <property type="entry name" value="NAD-binding domain of HMG-CoA reductase"/>
    <property type="match status" value="1"/>
</dbReference>
<dbReference type="SUPFAM" id="SSF56542">
    <property type="entry name" value="Substrate-binding domain of HMG-CoA reductase"/>
    <property type="match status" value="1"/>
</dbReference>
<dbReference type="PROSITE" id="PS00066">
    <property type="entry name" value="HMG_COA_REDUCTASE_1"/>
    <property type="match status" value="1"/>
</dbReference>
<dbReference type="PROSITE" id="PS00318">
    <property type="entry name" value="HMG_COA_REDUCTASE_2"/>
    <property type="match status" value="1"/>
</dbReference>
<dbReference type="PROSITE" id="PS01192">
    <property type="entry name" value="HMG_COA_REDUCTASE_3"/>
    <property type="match status" value="1"/>
</dbReference>
<dbReference type="PROSITE" id="PS50065">
    <property type="entry name" value="HMG_COA_REDUCTASE_4"/>
    <property type="match status" value="1"/>
</dbReference>
<sequence>MDVRRRPVKPLYPSEHISSGEPLKPHNQDSSVKASDALPLPLYLTNGLFFTMFFSVMYFLLHRWREKIRNGIPLHVLNFSELVAMVSLIASVIYLLGFFGIGFVQSFVSKGNNDSWDVEDESPEQFIDRTVTPPPVRRNIPMKSVPVAEKTAQIITPFSSEDDEVVIKSVVEGRIPSYSLESKLGDCKRAAFIRKEALQRSSGKSLEGLPLDGFDYESILGQCCEMPIGYIQIPVGIAGPLLLNGKEFSVPMATTEGCLVASTNRGCKAIYVSGGATSVLFRDAMTRAPVVRFGSAKRAAELKFFVEDPMNFETLSVVFNKSSRFARLQNIQCAIAGKNLYMRFSCSTGDAMGMNMVSKGVQNVLDYLQNEYPDMDIIGISGNYCSDKKPAAVNWIEGRGKSVVCEAIIKEDVVKKVLKTEVATLVELNMLKNLTGSAMAGALGGFNAHASNIVSAVYLATGQDPAQNIESSHCITMMEAVNDGKDLHISVTMPSIEVGTVGGGTQLASQSACLNLLGVKGANREAPGSNARLLATIVAGSVLAGELSLMSAISAGQLVKSHMKYNRSCKDVTK</sequence>
<feature type="chain" id="PRO_0000114450" description="3-hydroxy-3-methylglutaryl-coenzyme A reductase 3">
    <location>
        <begin position="1"/>
        <end position="574"/>
    </location>
</feature>
<feature type="transmembrane region" description="Helical" evidence="2">
    <location>
        <begin position="41"/>
        <end position="61"/>
    </location>
</feature>
<feature type="transmembrane region" description="Helical" evidence="2">
    <location>
        <begin position="83"/>
        <end position="103"/>
    </location>
</feature>
<feature type="region of interest" description="Disordered" evidence="4">
    <location>
        <begin position="1"/>
        <end position="30"/>
    </location>
</feature>
<feature type="region of interest" description="Linker" evidence="1">
    <location>
        <begin position="104"/>
        <end position="161"/>
    </location>
</feature>
<feature type="region of interest" description="Catalytic" evidence="1">
    <location>
        <begin position="162"/>
        <end position="574"/>
    </location>
</feature>
<feature type="active site" description="Charge relay system" evidence="1">
    <location>
        <position position="256"/>
    </location>
</feature>
<feature type="active site" description="Charge relay system" evidence="1">
    <location>
        <position position="388"/>
    </location>
</feature>
<feature type="active site" description="Charge relay system" evidence="1">
    <location>
        <position position="464"/>
    </location>
</feature>
<feature type="active site" description="Proton donor" evidence="3">
    <location>
        <position position="562"/>
    </location>
</feature>
<feature type="glycosylation site" description="N-linked (GlcNAc...) asparagine" evidence="2">
    <location>
        <position position="78"/>
    </location>
</feature>
<feature type="glycosylation site" description="N-linked (GlcNAc...) asparagine" evidence="2">
    <location>
        <position position="113"/>
    </location>
</feature>
<feature type="glycosylation site" description="N-linked (GlcNAc...) asparagine" evidence="2">
    <location>
        <position position="320"/>
    </location>
</feature>
<feature type="glycosylation site" description="N-linked (GlcNAc...) asparagine" evidence="2">
    <location>
        <position position="433"/>
    </location>
</feature>
<feature type="glycosylation site" description="N-linked (GlcNAc...) asparagine" evidence="2">
    <location>
        <position position="566"/>
    </location>
</feature>
<protein>
    <recommendedName>
        <fullName>3-hydroxy-3-methylglutaryl-coenzyme A reductase 3</fullName>
        <shortName>HMG-CoA reductase 3</shortName>
        <ecNumber>1.1.1.34</ecNumber>
    </recommendedName>
    <alternativeName>
        <fullName>HMG3.3</fullName>
    </alternativeName>
</protein>
<reference key="1">
    <citation type="journal article" date="1997" name="Plant Mol. Biol.">
        <title>HMG-CoA reductase gene families that differentially accumulate transcripts in potato tubers are developmentally expressed in floral tissues.</title>
        <authorList>
            <person name="Korth K.L."/>
            <person name="Stermer B.A."/>
            <person name="Bhattacharyya M.K."/>
            <person name="Dixon R.A."/>
        </authorList>
    </citation>
    <scope>NUCLEOTIDE SEQUENCE [MRNA]</scope>
    <source>
        <strain>cv. Kennebec</strain>
        <tissue>Tuber</tissue>
    </source>
</reference>
<reference key="2">
    <citation type="submission" date="1999-01" db="EMBL/GenBank/DDBJ databases">
        <title>Structure and nucleotide sequence of potato HMG3 encoding 3-hydroxy-3-methylglutaryl coenzyme A reductase.</title>
        <authorList>
            <person name="Itoh Y."/>
            <person name="Yoshioka H."/>
            <person name="Doke N."/>
        </authorList>
    </citation>
    <scope>NUCLEOTIDE SEQUENCE [GENOMIC DNA]</scope>
</reference>
<reference key="3">
    <citation type="journal article" date="2011" name="Nature">
        <title>Genome sequence and analysis of the tuber crop potato.</title>
        <authorList>
            <consortium name="The Potato Genome Sequencing Consortium"/>
        </authorList>
    </citation>
    <scope>NUCLEOTIDE SEQUENCE [LARGE SCALE GENOMIC DNA]</scope>
    <source>
        <strain>cv. DM1-3 516 R44</strain>
    </source>
</reference>